<dbReference type="EC" id="5.6.2.2" evidence="1"/>
<dbReference type="EMBL" id="Z17305">
    <property type="protein sequence ID" value="CAA78953.1"/>
    <property type="molecule type" value="Genomic_DNA"/>
</dbReference>
<dbReference type="PIR" id="S32883">
    <property type="entry name" value="S32883"/>
</dbReference>
<dbReference type="GO" id="GO:0005737">
    <property type="term" value="C:cytoplasm"/>
    <property type="evidence" value="ECO:0007669"/>
    <property type="project" value="UniProtKB-SubCell"/>
</dbReference>
<dbReference type="GO" id="GO:0005524">
    <property type="term" value="F:ATP binding"/>
    <property type="evidence" value="ECO:0007669"/>
    <property type="project" value="UniProtKB-KW"/>
</dbReference>
<dbReference type="GO" id="GO:0003677">
    <property type="term" value="F:DNA binding"/>
    <property type="evidence" value="ECO:0007669"/>
    <property type="project" value="UniProtKB-KW"/>
</dbReference>
<dbReference type="GO" id="GO:0003918">
    <property type="term" value="F:DNA topoisomerase type II (double strand cut, ATP-hydrolyzing) activity"/>
    <property type="evidence" value="ECO:0007669"/>
    <property type="project" value="UniProtKB-EC"/>
</dbReference>
<feature type="chain" id="PRO_0000145268" description="DNA gyrase subunit A">
    <location>
        <begin position="1"/>
        <end position="21" status="greater than"/>
    </location>
</feature>
<feature type="region of interest" description="Disordered" evidence="2">
    <location>
        <begin position="1"/>
        <end position="21"/>
    </location>
</feature>
<feature type="non-terminal residue">
    <location>
        <position position="21"/>
    </location>
</feature>
<organism>
    <name type="scientific">Streptomyces niveus</name>
    <name type="common">Streptomyces spheroides</name>
    <dbReference type="NCBI Taxonomy" id="193462"/>
    <lineage>
        <taxon>Bacteria</taxon>
        <taxon>Bacillati</taxon>
        <taxon>Actinomycetota</taxon>
        <taxon>Actinomycetes</taxon>
        <taxon>Kitasatosporales</taxon>
        <taxon>Streptomycetaceae</taxon>
        <taxon>Streptomyces</taxon>
    </lineage>
</organism>
<comment type="function">
    <text evidence="1">A type II topoisomerase that negatively supercoils closed circular double-stranded (ds) DNA in an ATP-dependent manner to modulate DNA topology and maintain chromosomes in an underwound state. Negative supercoiling favors strand separation, and DNA replication, transcription, recombination and repair, all of which involve strand separation. Also able to catalyze the interconversion of other topological isomers of dsDNA rings, including catenanes and knotted rings. Type II topoisomerases break and join 2 DNA strands simultaneously in an ATP-dependent manner.</text>
</comment>
<comment type="catalytic activity">
    <reaction evidence="1">
        <text>ATP-dependent breakage, passage and rejoining of double-stranded DNA.</text>
        <dbReference type="EC" id="5.6.2.2"/>
    </reaction>
</comment>
<comment type="subunit">
    <text evidence="1">Heterotetramer, composed of two GyrA and two GyrB chains. In the heterotetramer, GyrA contains the active site tyrosine that forms a transient covalent intermediate with DNA, while GyrB binds cofactors and catalyzes ATP hydrolysis.</text>
</comment>
<comment type="subcellular location">
    <subcellularLocation>
        <location evidence="1 3">Cytoplasm</location>
    </subcellularLocation>
</comment>
<comment type="miscellaneous">
    <text evidence="1">Few gyrases are as efficient as E.coli at forming negative supercoils. Not all organisms have 2 type II topoisomerases; in organisms with a single type II topoisomerase this enzyme also has to decatenate newly replicated chromosomes.</text>
</comment>
<comment type="similarity">
    <text evidence="1">Belongs to the type II topoisomerase GyrA/ParC subunit family.</text>
</comment>
<keyword id="KW-0067">ATP-binding</keyword>
<keyword id="KW-0963">Cytoplasm</keyword>
<keyword id="KW-0238">DNA-binding</keyword>
<keyword id="KW-0413">Isomerase</keyword>
<keyword id="KW-0547">Nucleotide-binding</keyword>
<keyword id="KW-0799">Topoisomerase</keyword>
<gene>
    <name evidence="1" type="primary">gyrA</name>
</gene>
<sequence>MADENTPVMPEEVPAVEGVGM</sequence>
<name>GYRA_STRNV</name>
<proteinExistence type="inferred from homology"/>
<reference key="1">
    <citation type="journal article" date="1993" name="Mol. Microbiol.">
        <title>Expression and analysis of two gyrB genes from the novobiocin producer, Streptomyces sphaeroides.</title>
        <authorList>
            <person name="Thiara A.S."/>
            <person name="Cundliffe E."/>
        </authorList>
    </citation>
    <scope>NUCLEOTIDE SEQUENCE [GENOMIC DNA]</scope>
    <source>
        <strain>ATCC 23965 / DSM 40292 / JCM 4252 / NBRC 12917 / NCIMB 11891 / NRRL 2449</strain>
    </source>
</reference>
<evidence type="ECO:0000255" key="1">
    <source>
        <dbReference type="HAMAP-Rule" id="MF_01897"/>
    </source>
</evidence>
<evidence type="ECO:0000256" key="2">
    <source>
        <dbReference type="SAM" id="MobiDB-lite"/>
    </source>
</evidence>
<evidence type="ECO:0000305" key="3"/>
<accession>P50071</accession>
<protein>
    <recommendedName>
        <fullName evidence="1">DNA gyrase subunit A</fullName>
        <ecNumber evidence="1">5.6.2.2</ecNumber>
    </recommendedName>
</protein>